<organism>
    <name type="scientific">Danio rerio</name>
    <name type="common">Zebrafish</name>
    <name type="synonym">Brachydanio rerio</name>
    <dbReference type="NCBI Taxonomy" id="7955"/>
    <lineage>
        <taxon>Eukaryota</taxon>
        <taxon>Metazoa</taxon>
        <taxon>Chordata</taxon>
        <taxon>Craniata</taxon>
        <taxon>Vertebrata</taxon>
        <taxon>Euteleostomi</taxon>
        <taxon>Actinopterygii</taxon>
        <taxon>Neopterygii</taxon>
        <taxon>Teleostei</taxon>
        <taxon>Ostariophysi</taxon>
        <taxon>Cypriniformes</taxon>
        <taxon>Danionidae</taxon>
        <taxon>Danioninae</taxon>
        <taxon>Danio</taxon>
    </lineage>
</organism>
<reference key="1">
    <citation type="journal article" date="2013" name="Nature">
        <title>The zebrafish reference genome sequence and its relationship to the human genome.</title>
        <authorList>
            <person name="Howe K."/>
            <person name="Clark M.D."/>
            <person name="Torroja C.F."/>
            <person name="Torrance J."/>
            <person name="Berthelot C."/>
            <person name="Muffato M."/>
            <person name="Collins J.E."/>
            <person name="Humphray S."/>
            <person name="McLaren K."/>
            <person name="Matthews L."/>
            <person name="McLaren S."/>
            <person name="Sealy I."/>
            <person name="Caccamo M."/>
            <person name="Churcher C."/>
            <person name="Scott C."/>
            <person name="Barrett J.C."/>
            <person name="Koch R."/>
            <person name="Rauch G.J."/>
            <person name="White S."/>
            <person name="Chow W."/>
            <person name="Kilian B."/>
            <person name="Quintais L.T."/>
            <person name="Guerra-Assuncao J.A."/>
            <person name="Zhou Y."/>
            <person name="Gu Y."/>
            <person name="Yen J."/>
            <person name="Vogel J.H."/>
            <person name="Eyre T."/>
            <person name="Redmond S."/>
            <person name="Banerjee R."/>
            <person name="Chi J."/>
            <person name="Fu B."/>
            <person name="Langley E."/>
            <person name="Maguire S.F."/>
            <person name="Laird G.K."/>
            <person name="Lloyd D."/>
            <person name="Kenyon E."/>
            <person name="Donaldson S."/>
            <person name="Sehra H."/>
            <person name="Almeida-King J."/>
            <person name="Loveland J."/>
            <person name="Trevanion S."/>
            <person name="Jones M."/>
            <person name="Quail M."/>
            <person name="Willey D."/>
            <person name="Hunt A."/>
            <person name="Burton J."/>
            <person name="Sims S."/>
            <person name="McLay K."/>
            <person name="Plumb B."/>
            <person name="Davis J."/>
            <person name="Clee C."/>
            <person name="Oliver K."/>
            <person name="Clark R."/>
            <person name="Riddle C."/>
            <person name="Elliot D."/>
            <person name="Threadgold G."/>
            <person name="Harden G."/>
            <person name="Ware D."/>
            <person name="Begum S."/>
            <person name="Mortimore B."/>
            <person name="Kerry G."/>
            <person name="Heath P."/>
            <person name="Phillimore B."/>
            <person name="Tracey A."/>
            <person name="Corby N."/>
            <person name="Dunn M."/>
            <person name="Johnson C."/>
            <person name="Wood J."/>
            <person name="Clark S."/>
            <person name="Pelan S."/>
            <person name="Griffiths G."/>
            <person name="Smith M."/>
            <person name="Glithero R."/>
            <person name="Howden P."/>
            <person name="Barker N."/>
            <person name="Lloyd C."/>
            <person name="Stevens C."/>
            <person name="Harley J."/>
            <person name="Holt K."/>
            <person name="Panagiotidis G."/>
            <person name="Lovell J."/>
            <person name="Beasley H."/>
            <person name="Henderson C."/>
            <person name="Gordon D."/>
            <person name="Auger K."/>
            <person name="Wright D."/>
            <person name="Collins J."/>
            <person name="Raisen C."/>
            <person name="Dyer L."/>
            <person name="Leung K."/>
            <person name="Robertson L."/>
            <person name="Ambridge K."/>
            <person name="Leongamornlert D."/>
            <person name="McGuire S."/>
            <person name="Gilderthorp R."/>
            <person name="Griffiths C."/>
            <person name="Manthravadi D."/>
            <person name="Nichol S."/>
            <person name="Barker G."/>
            <person name="Whitehead S."/>
            <person name="Kay M."/>
            <person name="Brown J."/>
            <person name="Murnane C."/>
            <person name="Gray E."/>
            <person name="Humphries M."/>
            <person name="Sycamore N."/>
            <person name="Barker D."/>
            <person name="Saunders D."/>
            <person name="Wallis J."/>
            <person name="Babbage A."/>
            <person name="Hammond S."/>
            <person name="Mashreghi-Mohammadi M."/>
            <person name="Barr L."/>
            <person name="Martin S."/>
            <person name="Wray P."/>
            <person name="Ellington A."/>
            <person name="Matthews N."/>
            <person name="Ellwood M."/>
            <person name="Woodmansey R."/>
            <person name="Clark G."/>
            <person name="Cooper J."/>
            <person name="Tromans A."/>
            <person name="Grafham D."/>
            <person name="Skuce C."/>
            <person name="Pandian R."/>
            <person name="Andrews R."/>
            <person name="Harrison E."/>
            <person name="Kimberley A."/>
            <person name="Garnett J."/>
            <person name="Fosker N."/>
            <person name="Hall R."/>
            <person name="Garner P."/>
            <person name="Kelly D."/>
            <person name="Bird C."/>
            <person name="Palmer S."/>
            <person name="Gehring I."/>
            <person name="Berger A."/>
            <person name="Dooley C.M."/>
            <person name="Ersan-Urun Z."/>
            <person name="Eser C."/>
            <person name="Geiger H."/>
            <person name="Geisler M."/>
            <person name="Karotki L."/>
            <person name="Kirn A."/>
            <person name="Konantz J."/>
            <person name="Konantz M."/>
            <person name="Oberlander M."/>
            <person name="Rudolph-Geiger S."/>
            <person name="Teucke M."/>
            <person name="Lanz C."/>
            <person name="Raddatz G."/>
            <person name="Osoegawa K."/>
            <person name="Zhu B."/>
            <person name="Rapp A."/>
            <person name="Widaa S."/>
            <person name="Langford C."/>
            <person name="Yang F."/>
            <person name="Schuster S.C."/>
            <person name="Carter N.P."/>
            <person name="Harrow J."/>
            <person name="Ning Z."/>
            <person name="Herrero J."/>
            <person name="Searle S.M."/>
            <person name="Enright A."/>
            <person name="Geisler R."/>
            <person name="Plasterk R.H."/>
            <person name="Lee C."/>
            <person name="Westerfield M."/>
            <person name="de Jong P.J."/>
            <person name="Zon L.I."/>
            <person name="Postlethwait J.H."/>
            <person name="Nusslein-Volhard C."/>
            <person name="Hubbard T.J."/>
            <person name="Roest Crollius H."/>
            <person name="Rogers J."/>
            <person name="Stemple D.L."/>
        </authorList>
    </citation>
    <scope>NUCLEOTIDE SEQUENCE [LARGE SCALE GENOMIC DNA]</scope>
    <source>
        <strain>Tuebingen</strain>
    </source>
</reference>
<reference key="2">
    <citation type="submission" date="2004-02" db="EMBL/GenBank/DDBJ databases">
        <authorList>
            <consortium name="NIH - Zebrafish Gene Collection (ZGC) project"/>
        </authorList>
    </citation>
    <scope>NUCLEOTIDE SEQUENCE [LARGE SCALE MRNA]</scope>
    <source>
        <tissue>Embryo</tissue>
    </source>
</reference>
<feature type="chain" id="PRO_0000287538" description="Midnolin">
    <location>
        <begin position="1"/>
        <end position="509"/>
    </location>
</feature>
<feature type="domain" description="Ubiquitin-like" evidence="3">
    <location>
        <begin position="28"/>
        <end position="102"/>
    </location>
</feature>
<feature type="region of interest" description="Disordered" evidence="4">
    <location>
        <begin position="1"/>
        <end position="27"/>
    </location>
</feature>
<feature type="region of interest" description="Disordered" evidence="4">
    <location>
        <begin position="172"/>
        <end position="295"/>
    </location>
</feature>
<feature type="region of interest" description="Disordered" evidence="4">
    <location>
        <begin position="370"/>
        <end position="404"/>
    </location>
</feature>
<feature type="region of interest" description="Disordered" evidence="4">
    <location>
        <begin position="448"/>
        <end position="485"/>
    </location>
</feature>
<feature type="compositionally biased region" description="Polar residues" evidence="4">
    <location>
        <begin position="1"/>
        <end position="12"/>
    </location>
</feature>
<feature type="compositionally biased region" description="Low complexity" evidence="4">
    <location>
        <begin position="176"/>
        <end position="190"/>
    </location>
</feature>
<feature type="compositionally biased region" description="Basic residues" evidence="4">
    <location>
        <begin position="196"/>
        <end position="209"/>
    </location>
</feature>
<feature type="compositionally biased region" description="Pro residues" evidence="4">
    <location>
        <begin position="220"/>
        <end position="231"/>
    </location>
</feature>
<feature type="compositionally biased region" description="Low complexity" evidence="4">
    <location>
        <begin position="261"/>
        <end position="285"/>
    </location>
</feature>
<feature type="compositionally biased region" description="Polar residues" evidence="4">
    <location>
        <begin position="286"/>
        <end position="295"/>
    </location>
</feature>
<feature type="compositionally biased region" description="Pro residues" evidence="4">
    <location>
        <begin position="376"/>
        <end position="386"/>
    </location>
</feature>
<feature type="compositionally biased region" description="Low complexity" evidence="4">
    <location>
        <begin position="387"/>
        <end position="400"/>
    </location>
</feature>
<sequence length="509" mass="54873">MDQHPSARSCSSRGAAPSCESVSGEPPMNLYIHSTTGTRFELSLPAEETVEGLKRRLSQRLKVPKERLALLHKETRLSSGKLQDLGITDGSKLTLVPTVEAGLMSQASRPEQSVMQALESLTETQVSDFLSGRSPLTLALRVGDHMMFVQLQLAAQPSGGPQLQHRHLISRGSSEGTTGLSHGASGSASGMARVSHNPHPHHPHQHPHHPNTTLPSNPAAFPPSPSIPSIPPMYSTSASGHCSPPPQPSQLPGSFLHSQQPSSACAPSPSSPSPAASCPEASCSAKTSGNCNTPLRSRKPGAIIESFVNHAPGVFSGTFSGTLHPNCQDSTGRPRRDIGTILQILNDLLSATRHYQGMPPSLTQLRYQTQCTSPNSPAPSPPPSPPHTTGLTGLPTTVPSETQPTLHPLVQCQSQIRMCKPPGDRLRQTENRATRCKVERLQLLMQQKRLRRKARRDSRAPYHWLPNRKAGRSNSNSSMSSEGSLDLDFEDSVWKPDVKADMKSEFIMA</sequence>
<name>MIDN_DANRE</name>
<keyword id="KW-0963">Cytoplasm</keyword>
<keyword id="KW-0539">Nucleus</keyword>
<keyword id="KW-1185">Reference proteome</keyword>
<gene>
    <name type="primary">midn</name>
    <name type="ORF">ch211-79c14.1</name>
</gene>
<accession>Q6NYU6</accession>
<dbReference type="EMBL" id="BX649276">
    <property type="protein sequence ID" value="CAK04988.1"/>
    <property type="molecule type" value="Genomic_DNA"/>
</dbReference>
<dbReference type="EMBL" id="BC066456">
    <property type="protein sequence ID" value="AAH66456.1"/>
    <property type="molecule type" value="mRNA"/>
</dbReference>
<dbReference type="RefSeq" id="NP_996935.1">
    <property type="nucleotide sequence ID" value="NM_207052.1"/>
</dbReference>
<dbReference type="SMR" id="Q6NYU6"/>
<dbReference type="FunCoup" id="Q6NYU6">
    <property type="interactions" value="1598"/>
</dbReference>
<dbReference type="STRING" id="7955.ENSDARP00000022102"/>
<dbReference type="PaxDb" id="7955-ENSDARP00000022102"/>
<dbReference type="Ensembl" id="ENSDART00000003929">
    <property type="protein sequence ID" value="ENSDARP00000022102"/>
    <property type="gene ID" value="ENSDARG00000018524"/>
</dbReference>
<dbReference type="Ensembl" id="ENSDART00000167466">
    <property type="protein sequence ID" value="ENSDARP00000140760"/>
    <property type="gene ID" value="ENSDARG00000018524"/>
</dbReference>
<dbReference type="GeneID" id="323713"/>
<dbReference type="KEGG" id="dre:323713"/>
<dbReference type="AGR" id="ZFIN:ZDB-GENE-030131-2433"/>
<dbReference type="CTD" id="90007"/>
<dbReference type="ZFIN" id="ZDB-GENE-030131-2433">
    <property type="gene designation" value="midn"/>
</dbReference>
<dbReference type="eggNOG" id="ENOG502QTDX">
    <property type="taxonomic scope" value="Eukaryota"/>
</dbReference>
<dbReference type="InParanoid" id="Q6NYU6"/>
<dbReference type="OMA" id="PSHDIGQ"/>
<dbReference type="OrthoDB" id="1916003at2759"/>
<dbReference type="PhylomeDB" id="Q6NYU6"/>
<dbReference type="TreeFam" id="TF329735"/>
<dbReference type="PRO" id="PR:Q6NYU6"/>
<dbReference type="Proteomes" id="UP000000437">
    <property type="component" value="Chromosome 22"/>
</dbReference>
<dbReference type="Bgee" id="ENSDARG00000018524">
    <property type="expression patterns" value="Expressed in somite and 49 other cell types or tissues"/>
</dbReference>
<dbReference type="ExpressionAtlas" id="Q6NYU6">
    <property type="expression patterns" value="baseline and differential"/>
</dbReference>
<dbReference type="GO" id="GO:0005829">
    <property type="term" value="C:cytosol"/>
    <property type="evidence" value="ECO:0007669"/>
    <property type="project" value="UniProtKB-SubCell"/>
</dbReference>
<dbReference type="GO" id="GO:0005730">
    <property type="term" value="C:nucleolus"/>
    <property type="evidence" value="ECO:0007669"/>
    <property type="project" value="UniProtKB-SubCell"/>
</dbReference>
<dbReference type="GO" id="GO:0005634">
    <property type="term" value="C:nucleus"/>
    <property type="evidence" value="ECO:0000318"/>
    <property type="project" value="GO_Central"/>
</dbReference>
<dbReference type="CDD" id="cd01804">
    <property type="entry name" value="Ubl_midnolin"/>
    <property type="match status" value="1"/>
</dbReference>
<dbReference type="FunFam" id="3.10.20.90:FF:000180">
    <property type="entry name" value="midnolin isoform X1"/>
    <property type="match status" value="1"/>
</dbReference>
<dbReference type="Gene3D" id="3.10.20.90">
    <property type="entry name" value="Phosphatidylinositol 3-kinase Catalytic Subunit, Chain A, domain 1"/>
    <property type="match status" value="1"/>
</dbReference>
<dbReference type="InterPro" id="IPR039336">
    <property type="entry name" value="Midnolin"/>
</dbReference>
<dbReference type="InterPro" id="IPR000626">
    <property type="entry name" value="Ubiquitin-like_dom"/>
</dbReference>
<dbReference type="InterPro" id="IPR029071">
    <property type="entry name" value="Ubiquitin-like_domsf"/>
</dbReference>
<dbReference type="PANTHER" id="PTHR23010">
    <property type="entry name" value="MIDNOLIN"/>
    <property type="match status" value="1"/>
</dbReference>
<dbReference type="PANTHER" id="PTHR23010:SF1">
    <property type="entry name" value="MIDNOLIN"/>
    <property type="match status" value="1"/>
</dbReference>
<dbReference type="Pfam" id="PF00240">
    <property type="entry name" value="ubiquitin"/>
    <property type="match status" value="1"/>
</dbReference>
<dbReference type="SMART" id="SM00213">
    <property type="entry name" value="UBQ"/>
    <property type="match status" value="1"/>
</dbReference>
<dbReference type="SUPFAM" id="SSF54236">
    <property type="entry name" value="Ubiquitin-like"/>
    <property type="match status" value="1"/>
</dbReference>
<dbReference type="PROSITE" id="PS50053">
    <property type="entry name" value="UBIQUITIN_2"/>
    <property type="match status" value="1"/>
</dbReference>
<protein>
    <recommendedName>
        <fullName>Midnolin</fullName>
    </recommendedName>
    <alternativeName>
        <fullName>Midbrain nucleolar protein</fullName>
    </alternativeName>
</protein>
<proteinExistence type="evidence at transcript level"/>
<evidence type="ECO:0000250" key="1">
    <source>
        <dbReference type="UniProtKB" id="D4AE48"/>
    </source>
</evidence>
<evidence type="ECO:0000250" key="2">
    <source>
        <dbReference type="UniProtKB" id="Q3TPJ7"/>
    </source>
</evidence>
<evidence type="ECO:0000255" key="3">
    <source>
        <dbReference type="PROSITE-ProRule" id="PRU00214"/>
    </source>
</evidence>
<evidence type="ECO:0000256" key="4">
    <source>
        <dbReference type="SAM" id="MobiDB-lite"/>
    </source>
</evidence>
<comment type="function">
    <text evidence="1 2">Facilitates ubiquitin-independent proteasomal degradation of polycomb protein CBX4. Plays a role in inhibiting the activity of glucokinase GCK and both glucose-induced and basal insulin secretion.</text>
</comment>
<comment type="subcellular location">
    <subcellularLocation>
        <location evidence="2">Nucleus</location>
    </subcellularLocation>
    <subcellularLocation>
        <location evidence="2">Cytoplasm</location>
        <location evidence="2">Cytosol</location>
    </subcellularLocation>
    <subcellularLocation>
        <location evidence="2">Nucleus</location>
        <location evidence="2">Nucleolus</location>
    </subcellularLocation>
    <text evidence="2">Detected in the nucleus and nucleolus with no expression in the cytoplasm. However, a later study finds expression in the nucleus and cytoplasm with no expression in the nucleolus.</text>
</comment>